<name>6PGL_YERPP</name>
<sequence length="334" mass="36446">MKQAVYVASPDSQQIHVWQLDSAGELTLLQTVDVPGQVQPMAISPNQRHLYVGVRPDFGIVSYHIADDGTLTAAGMAPLPGSPTHIDTDRQGRFLFSASYSFNCVSISPIDTHGVVQAPIQQLDDLPAPHSANIDPTNQILLVPCLKEDKVRLFDLSAEGQLTPHAQADITVAAGAGPRHMAFHPNHQVAYCVNELNSSVDVYQISNNGQEYHLVQSLDAMPADFTGTRWAADIHITPNGRYLYISDRTANLLGIFTVSEDGRVISLVGHHLTEAQPRGFNIDHSGNFLIASGQKSDHIEVYRIDQNTGELTTLKRYPVGKGPMWVSIRGAQNS</sequence>
<proteinExistence type="inferred from homology"/>
<keyword id="KW-0119">Carbohydrate metabolism</keyword>
<keyword id="KW-0313">Glucose metabolism</keyword>
<keyword id="KW-0378">Hydrolase</keyword>
<accession>A4TNQ8</accession>
<gene>
    <name evidence="1" type="primary">pgl</name>
    <name type="ordered locus">YPDSF_2548</name>
</gene>
<protein>
    <recommendedName>
        <fullName evidence="1">6-phosphogluconolactonase</fullName>
        <shortName evidence="1">6-P-gluconolactonase</shortName>
        <ecNumber evidence="1">3.1.1.31</ecNumber>
    </recommendedName>
</protein>
<evidence type="ECO:0000255" key="1">
    <source>
        <dbReference type="HAMAP-Rule" id="MF_01605"/>
    </source>
</evidence>
<organism>
    <name type="scientific">Yersinia pestis (strain Pestoides F)</name>
    <dbReference type="NCBI Taxonomy" id="386656"/>
    <lineage>
        <taxon>Bacteria</taxon>
        <taxon>Pseudomonadati</taxon>
        <taxon>Pseudomonadota</taxon>
        <taxon>Gammaproteobacteria</taxon>
        <taxon>Enterobacterales</taxon>
        <taxon>Yersiniaceae</taxon>
        <taxon>Yersinia</taxon>
    </lineage>
</organism>
<dbReference type="EC" id="3.1.1.31" evidence="1"/>
<dbReference type="EMBL" id="CP000668">
    <property type="protein sequence ID" value="ABP40920.1"/>
    <property type="molecule type" value="Genomic_DNA"/>
</dbReference>
<dbReference type="RefSeq" id="WP_002210760.1">
    <property type="nucleotide sequence ID" value="NZ_CP009715.1"/>
</dbReference>
<dbReference type="SMR" id="A4TNQ8"/>
<dbReference type="GeneID" id="57977288"/>
<dbReference type="KEGG" id="ypp:YPDSF_2548"/>
<dbReference type="PATRIC" id="fig|386656.14.peg.4066"/>
<dbReference type="UniPathway" id="UPA00115">
    <property type="reaction ID" value="UER00409"/>
</dbReference>
<dbReference type="GO" id="GO:0005829">
    <property type="term" value="C:cytosol"/>
    <property type="evidence" value="ECO:0007669"/>
    <property type="project" value="TreeGrafter"/>
</dbReference>
<dbReference type="GO" id="GO:0017057">
    <property type="term" value="F:6-phosphogluconolactonase activity"/>
    <property type="evidence" value="ECO:0007669"/>
    <property type="project" value="UniProtKB-UniRule"/>
</dbReference>
<dbReference type="GO" id="GO:0006006">
    <property type="term" value="P:glucose metabolic process"/>
    <property type="evidence" value="ECO:0007669"/>
    <property type="project" value="UniProtKB-KW"/>
</dbReference>
<dbReference type="GO" id="GO:0009051">
    <property type="term" value="P:pentose-phosphate shunt, oxidative branch"/>
    <property type="evidence" value="ECO:0007669"/>
    <property type="project" value="UniProtKB-UniRule"/>
</dbReference>
<dbReference type="FunFam" id="2.130.10.10:FF:000051">
    <property type="entry name" value="6-phosphogluconolactonase"/>
    <property type="match status" value="1"/>
</dbReference>
<dbReference type="Gene3D" id="2.130.10.10">
    <property type="entry name" value="YVTN repeat-like/Quinoprotein amine dehydrogenase"/>
    <property type="match status" value="1"/>
</dbReference>
<dbReference type="HAMAP" id="MF_01605">
    <property type="entry name" value="6P_gluconolactonase"/>
    <property type="match status" value="1"/>
</dbReference>
<dbReference type="InterPro" id="IPR022528">
    <property type="entry name" value="6-phosphogluconolactonase_YbhE"/>
</dbReference>
<dbReference type="InterPro" id="IPR050282">
    <property type="entry name" value="Cycloisomerase_2"/>
</dbReference>
<dbReference type="InterPro" id="IPR019405">
    <property type="entry name" value="Lactonase_7-beta_prop"/>
</dbReference>
<dbReference type="InterPro" id="IPR011045">
    <property type="entry name" value="N2O_reductase_N"/>
</dbReference>
<dbReference type="InterPro" id="IPR015943">
    <property type="entry name" value="WD40/YVTN_repeat-like_dom_sf"/>
</dbReference>
<dbReference type="NCBIfam" id="NF008258">
    <property type="entry name" value="PRK11028.1"/>
    <property type="match status" value="1"/>
</dbReference>
<dbReference type="PANTHER" id="PTHR30344:SF1">
    <property type="entry name" value="6-PHOSPHOGLUCONOLACTONASE"/>
    <property type="match status" value="1"/>
</dbReference>
<dbReference type="PANTHER" id="PTHR30344">
    <property type="entry name" value="6-PHOSPHOGLUCONOLACTONASE-RELATED"/>
    <property type="match status" value="1"/>
</dbReference>
<dbReference type="Pfam" id="PF10282">
    <property type="entry name" value="Lactonase"/>
    <property type="match status" value="1"/>
</dbReference>
<dbReference type="SUPFAM" id="SSF50974">
    <property type="entry name" value="Nitrous oxide reductase, N-terminal domain"/>
    <property type="match status" value="1"/>
</dbReference>
<reference key="1">
    <citation type="submission" date="2007-02" db="EMBL/GenBank/DDBJ databases">
        <title>Complete sequence of chromosome of Yersinia pestis Pestoides F.</title>
        <authorList>
            <consortium name="US DOE Joint Genome Institute"/>
            <person name="Copeland A."/>
            <person name="Lucas S."/>
            <person name="Lapidus A."/>
            <person name="Barry K."/>
            <person name="Detter J.C."/>
            <person name="Glavina del Rio T."/>
            <person name="Hammon N."/>
            <person name="Israni S."/>
            <person name="Dalin E."/>
            <person name="Tice H."/>
            <person name="Pitluck S."/>
            <person name="Di Bartolo G."/>
            <person name="Chain P."/>
            <person name="Malfatti S."/>
            <person name="Shin M."/>
            <person name="Vergez L."/>
            <person name="Schmutz J."/>
            <person name="Larimer F."/>
            <person name="Land M."/>
            <person name="Hauser L."/>
            <person name="Worsham P."/>
            <person name="Chu M."/>
            <person name="Bearden S."/>
            <person name="Garcia E."/>
            <person name="Richardson P."/>
        </authorList>
    </citation>
    <scope>NUCLEOTIDE SEQUENCE [LARGE SCALE GENOMIC DNA]</scope>
    <source>
        <strain>Pestoides F</strain>
    </source>
</reference>
<feature type="chain" id="PRO_1000069414" description="6-phosphogluconolactonase">
    <location>
        <begin position="1"/>
        <end position="334"/>
    </location>
</feature>
<comment type="function">
    <text evidence="1">Catalyzes the hydrolysis of 6-phosphogluconolactone to 6-phosphogluconate.</text>
</comment>
<comment type="catalytic activity">
    <reaction evidence="1">
        <text>6-phospho-D-glucono-1,5-lactone + H2O = 6-phospho-D-gluconate + H(+)</text>
        <dbReference type="Rhea" id="RHEA:12556"/>
        <dbReference type="ChEBI" id="CHEBI:15377"/>
        <dbReference type="ChEBI" id="CHEBI:15378"/>
        <dbReference type="ChEBI" id="CHEBI:57955"/>
        <dbReference type="ChEBI" id="CHEBI:58759"/>
        <dbReference type="EC" id="3.1.1.31"/>
    </reaction>
</comment>
<comment type="pathway">
    <text evidence="1">Carbohydrate degradation; pentose phosphate pathway; D-ribulose 5-phosphate from D-glucose 6-phosphate (oxidative stage): step 2/3.</text>
</comment>
<comment type="similarity">
    <text evidence="1">Belongs to the cycloisomerase 2 family.</text>
</comment>